<feature type="signal peptide" evidence="19">
    <location>
        <begin position="1"/>
        <end position="32"/>
    </location>
</feature>
<feature type="chain" id="PRO_0000432088" description="tRNA nuclease CdiA" evidence="2">
    <location>
        <begin position="33"/>
        <end position="3242"/>
    </location>
</feature>
<feature type="region of interest" description="Two-partner system transport domain (TPS)" evidence="19">
    <location>
        <begin position="36"/>
        <end position="322"/>
    </location>
</feature>
<feature type="region of interest" description="FHA-1" evidence="19">
    <location>
        <begin position="351"/>
        <end position="1376"/>
    </location>
</feature>
<feature type="region of interest" description="Receptor-binding domain (RBD)" evidence="19">
    <location>
        <begin position="1377"/>
        <end position="1668"/>
    </location>
</feature>
<feature type="region of interest" description="YP domain" evidence="1">
    <location>
        <begin position="1668"/>
        <end position="1852"/>
    </location>
</feature>
<feature type="region of interest" description="Periplasmic FHA-1 repeat (pFR)" evidence="19">
    <location>
        <begin position="1853"/>
        <end position="1913"/>
    </location>
</feature>
<feature type="region of interest" description="FHA-2" evidence="19">
    <location>
        <begin position="2021"/>
        <end position="2631"/>
    </location>
</feature>
<feature type="region of interest" description="Disordered" evidence="3">
    <location>
        <begin position="2075"/>
        <end position="2094"/>
    </location>
</feature>
<feature type="region of interest" description="Disordered" evidence="3">
    <location>
        <begin position="2310"/>
        <end position="2333"/>
    </location>
</feature>
<feature type="region of interest" description="Disordered" evidence="3">
    <location>
        <begin position="2439"/>
        <end position="2481"/>
    </location>
</feature>
<feature type="region of interest" description="DUF638-CT domain; not toxic when added to the outside of E.coli, does not interfere with F-pilus mediated conjugation, toxic when expressed intracellularly" evidence="7">
    <location>
        <begin position="2969"/>
        <end position="3242"/>
    </location>
</feature>
<feature type="region of interest" description="Pre-toxin (PT) domain" evidence="19">
    <location>
        <begin position="2972"/>
        <end position="3015"/>
    </location>
</feature>
<feature type="region of interest" description="CT domain; toxic when added to the outside of E.coli and when expressed intracellularly" evidence="5 7">
    <location>
        <begin position="3016"/>
        <end position="3242"/>
    </location>
</feature>
<feature type="region of interest" description="Toxin import domain; sufficient to import the tRNA nuclease domain of colicin E5 into E.coli, may bind F-pili" evidence="7">
    <location>
        <begin position="3016"/>
        <end position="3097"/>
    </location>
</feature>
<feature type="region of interest" description="C-terminal effector domain (CT)" evidence="16">
    <location>
        <begin position="3020"/>
        <end position="3242"/>
    </location>
</feature>
<feature type="region of interest" description="Inner membrane translocation domain (IMTD), targets protein to FtsH" evidence="9">
    <location>
        <begin position="3020"/>
        <end position="3141"/>
    </location>
</feature>
<feature type="region of interest" description="tRNase function, does not interfere with F-pilus mediated conjugation" evidence="5 7">
    <location>
        <begin position="3098"/>
        <end position="3242"/>
    </location>
</feature>
<feature type="region of interest" description="Disordered" evidence="3">
    <location>
        <begin position="3116"/>
        <end position="3146"/>
    </location>
</feature>
<feature type="coiled-coil region" evidence="2">
    <location>
        <begin position="3137"/>
        <end position="3238"/>
    </location>
</feature>
<feature type="short sequence motif" description="VENN CT cleavage motif" evidence="15">
    <location>
        <begin position="3016"/>
        <end position="3019"/>
    </location>
</feature>
<feature type="compositionally biased region" description="Basic and acidic residues" evidence="3">
    <location>
        <begin position="2075"/>
        <end position="2091"/>
    </location>
</feature>
<feature type="compositionally biased region" description="Polar residues" evidence="3">
    <location>
        <begin position="2322"/>
        <end position="2333"/>
    </location>
</feature>
<feature type="compositionally biased region" description="Basic and acidic residues" evidence="3">
    <location>
        <begin position="3134"/>
        <end position="3146"/>
    </location>
</feature>
<feature type="active site" evidence="18">
    <location>
        <position position="3170"/>
    </location>
</feature>
<feature type="active site" evidence="18">
    <location>
        <position position="3193"/>
    </location>
</feature>
<feature type="active site" evidence="18">
    <location>
        <position position="3196"/>
    </location>
</feature>
<feature type="mutagenesis site" description="No loss of toxicity when expressed as the isolated CT domain and added extracellularly to E.coli, toxic when expressed intracellularly; VENN-less." evidence="7">
    <location>
        <begin position="3016"/>
        <end position="3022"/>
    </location>
</feature>
<feature type="mutagenesis site" description="Not toxic when expressed as the isolated CT domain and added extracellularly to E.coli, does not interfere with F-pilus mediated conjugation, toxic when expressed intracellularly; Cys-less. Probably has a cell import defect." evidence="7">
    <original>CAVAAPC</original>
    <variation>SAVAAPS</variation>
    <location>
        <begin position="3028"/>
        <end position="3034"/>
    </location>
</feature>
<feature type="mutagenesis site" description="Wild-type growth inhibition activity in vivo." evidence="10">
    <original>N</original>
    <variation>A</variation>
    <location>
        <position position="3164"/>
    </location>
</feature>
<feature type="mutagenesis site" description="Wild-type growth inhibition activity in vivo." evidence="10">
    <original>K</original>
    <variation>A</variation>
    <location>
        <position position="3167"/>
    </location>
</feature>
<feature type="mutagenesis site" description="Loss of growth inhibition activity in vivo, loss of tRNase activity even in presence of CysK." evidence="10">
    <original>D</original>
    <variation>A</variation>
    <location>
        <position position="3170"/>
    </location>
</feature>
<feature type="mutagenesis site" description="Loss of growth inhibition activity in vivo, significant loss of tRNase activity even in presence of CysK." evidence="10">
    <original>W</original>
    <variation>A</variation>
    <location>
        <position position="3191"/>
    </location>
</feature>
<feature type="mutagenesis site" description="Loss of tRNase activity even in the presence of CysK, still binds cognate CdiI, when expressed as the isolated CT domain in vitro (Ref.3), or expressed intracellularly (Ref.5), or expressed as intact CdiA in vivo. Protein is exported to the cell surface normally. Interferes with F-pilus mediated conjugation." evidence="5 7 10">
    <original>H</original>
    <variation>A</variation>
    <location>
        <position position="3193"/>
    </location>
</feature>
<feature type="mutagenesis site" description="Loss of growth inhibition activity in vivo, loss of tRNase activity even in presence of CysK." evidence="10">
    <original>E</original>
    <variation>A</variation>
    <location>
        <position position="3196"/>
    </location>
</feature>
<feature type="mutagenesis site" description="Wild-type growth inhibition activity in vivo." evidence="10">
    <original>T</original>
    <variation>A</variation>
    <location>
        <position position="3200"/>
    </location>
</feature>
<feature type="mutagenesis site" description="Wild-type growth inhibition activity in vivo, slight decrease in tRNase activity even in presence of CysK." evidence="10">
    <original>R</original>
    <variation>A</variation>
    <location>
        <position position="3202"/>
    </location>
</feature>
<feature type="mutagenesis site" description="No longer binds CysK, has no tRNase activity in vitro, when expressed as the isolated CT domain." evidence="5">
    <location>
        <begin position="3239"/>
        <end position="3242"/>
    </location>
</feature>
<feature type="mutagenesis site" description="No longer binds CysK in vitro, reduced tRNase activity in vivo, when expressed as the isolated CT domain." evidence="5">
    <location>
        <position position="3242"/>
    </location>
</feature>
<feature type="helix" evidence="22">
    <location>
        <begin position="3149"/>
        <end position="3164"/>
    </location>
</feature>
<feature type="strand" evidence="22">
    <location>
        <begin position="3165"/>
        <end position="3167"/>
    </location>
</feature>
<feature type="helix" evidence="22">
    <location>
        <begin position="3168"/>
        <end position="3178"/>
    </location>
</feature>
<feature type="strand" evidence="23">
    <location>
        <begin position="3183"/>
        <end position="3191"/>
    </location>
</feature>
<feature type="helix" evidence="22">
    <location>
        <begin position="3193"/>
        <end position="3211"/>
    </location>
</feature>
<feature type="helix" evidence="22">
    <location>
        <begin position="3217"/>
        <end position="3237"/>
    </location>
</feature>
<feature type="turn" evidence="22">
    <location>
        <begin position="3238"/>
        <end position="3241"/>
    </location>
</feature>
<dbReference type="EC" id="3.1.-.-"/>
<dbReference type="EMBL" id="CP000247">
    <property type="protein sequence ID" value="ABG72516.1"/>
    <property type="molecule type" value="Genomic_DNA"/>
</dbReference>
<dbReference type="RefSeq" id="WP_000554175.1">
    <property type="nucleotide sequence ID" value="NC_008253.1"/>
</dbReference>
<dbReference type="PDB" id="5J43">
    <property type="method" value="X-ray"/>
    <property type="resolution" value="2.70 A"/>
    <property type="chains" value="B/F=3016-3242"/>
</dbReference>
<dbReference type="PDB" id="5J5V">
    <property type="method" value="X-ray"/>
    <property type="resolution" value="2.75 A"/>
    <property type="chains" value="B/E=3016-3242"/>
</dbReference>
<dbReference type="PDB" id="8ZYC">
    <property type="method" value="EM"/>
    <property type="resolution" value="2.99 A"/>
    <property type="chains" value="B=3016-3242"/>
</dbReference>
<dbReference type="PDB" id="8ZYD">
    <property type="method" value="EM"/>
    <property type="resolution" value="3.04 A"/>
    <property type="chains" value="B=3016-3242"/>
</dbReference>
<dbReference type="PDBsum" id="5J43"/>
<dbReference type="PDBsum" id="5J5V"/>
<dbReference type="PDBsum" id="8ZYC"/>
<dbReference type="PDBsum" id="8ZYD"/>
<dbReference type="EMDB" id="EMD-60561"/>
<dbReference type="EMDB" id="EMD-60562"/>
<dbReference type="EMDB" id="EMD-60563"/>
<dbReference type="EMDB" id="EMD-60564"/>
<dbReference type="SMR" id="Q0T963"/>
<dbReference type="KEGG" id="ecp:ECP_4580"/>
<dbReference type="HOGENOM" id="CLU_000043_2_2_6"/>
<dbReference type="Proteomes" id="UP000009182">
    <property type="component" value="Chromosome"/>
</dbReference>
<dbReference type="GO" id="GO:0005576">
    <property type="term" value="C:extracellular region"/>
    <property type="evidence" value="ECO:0007669"/>
    <property type="project" value="UniProtKB-SubCell"/>
</dbReference>
<dbReference type="GO" id="GO:0030430">
    <property type="term" value="C:host cell cytoplasm"/>
    <property type="evidence" value="ECO:0000314"/>
    <property type="project" value="UniProtKB"/>
</dbReference>
<dbReference type="GO" id="GO:0016020">
    <property type="term" value="C:membrane"/>
    <property type="evidence" value="ECO:0007669"/>
    <property type="project" value="UniProtKB-KW"/>
</dbReference>
<dbReference type="GO" id="GO:0044218">
    <property type="term" value="C:other organism cell membrane"/>
    <property type="evidence" value="ECO:0007669"/>
    <property type="project" value="UniProtKB-KW"/>
</dbReference>
<dbReference type="GO" id="GO:0004521">
    <property type="term" value="F:RNA endonuclease activity"/>
    <property type="evidence" value="ECO:0000314"/>
    <property type="project" value="UniProtKB"/>
</dbReference>
<dbReference type="GO" id="GO:0090729">
    <property type="term" value="F:toxin activity"/>
    <property type="evidence" value="ECO:0007669"/>
    <property type="project" value="UniProtKB-KW"/>
</dbReference>
<dbReference type="GO" id="GO:0000049">
    <property type="term" value="F:tRNA binding"/>
    <property type="evidence" value="ECO:0007669"/>
    <property type="project" value="UniProtKB-KW"/>
</dbReference>
<dbReference type="GO" id="GO:0004549">
    <property type="term" value="F:tRNA-specific ribonuclease activity"/>
    <property type="evidence" value="ECO:0000314"/>
    <property type="project" value="UniProtKB"/>
</dbReference>
<dbReference type="CDD" id="cd20700">
    <property type="entry name" value="CdiA-CT_Ec_tRNase"/>
    <property type="match status" value="1"/>
</dbReference>
<dbReference type="FunFam" id="2.160.20.10:FF:000048">
    <property type="entry name" value="tRNA nuclease CdiA"/>
    <property type="match status" value="1"/>
</dbReference>
<dbReference type="Gene3D" id="2.160.20.10">
    <property type="entry name" value="Single-stranded right-handed beta-helix, Pectin lyase-like"/>
    <property type="match status" value="1"/>
</dbReference>
<dbReference type="InterPro" id="IPR010069">
    <property type="entry name" value="CdiA_FHA1_rpt"/>
</dbReference>
<dbReference type="InterPro" id="IPR008638">
    <property type="entry name" value="FhaB/CdiA-like_TPS"/>
</dbReference>
<dbReference type="InterPro" id="IPR025157">
    <property type="entry name" value="Hemagglutinin_rpt"/>
</dbReference>
<dbReference type="InterPro" id="IPR006626">
    <property type="entry name" value="PbH1"/>
</dbReference>
<dbReference type="InterPro" id="IPR012334">
    <property type="entry name" value="Pectin_lyas_fold"/>
</dbReference>
<dbReference type="InterPro" id="IPR011050">
    <property type="entry name" value="Pectin_lyase_fold/virulence"/>
</dbReference>
<dbReference type="InterPro" id="IPR006914">
    <property type="entry name" value="VENN_dom"/>
</dbReference>
<dbReference type="NCBIfam" id="TIGR01901">
    <property type="entry name" value="adhes_NPXG"/>
    <property type="match status" value="1"/>
</dbReference>
<dbReference type="NCBIfam" id="TIGR01731">
    <property type="entry name" value="fil_hemag_20aa"/>
    <property type="match status" value="19"/>
</dbReference>
<dbReference type="Pfam" id="PF13332">
    <property type="entry name" value="Fil_haemagg_2"/>
    <property type="match status" value="4"/>
</dbReference>
<dbReference type="Pfam" id="PF04829">
    <property type="entry name" value="PT-VENN"/>
    <property type="match status" value="1"/>
</dbReference>
<dbReference type="Pfam" id="PF05860">
    <property type="entry name" value="TPS"/>
    <property type="match status" value="1"/>
</dbReference>
<dbReference type="SMART" id="SM00912">
    <property type="entry name" value="Haemagg_act"/>
    <property type="match status" value="1"/>
</dbReference>
<dbReference type="SMART" id="SM00710">
    <property type="entry name" value="PbH1"/>
    <property type="match status" value="7"/>
</dbReference>
<dbReference type="SUPFAM" id="SSF51126">
    <property type="entry name" value="Pectin lyase-like"/>
    <property type="match status" value="1"/>
</dbReference>
<reference key="1">
    <citation type="journal article" date="2006" name="Mol. Microbiol.">
        <title>Role of pathogenicity island-associated integrases in the genome plasticity of uropathogenic Escherichia coli strain 536.</title>
        <authorList>
            <person name="Hochhut B."/>
            <person name="Wilde C."/>
            <person name="Balling G."/>
            <person name="Middendorf B."/>
            <person name="Dobrindt U."/>
            <person name="Brzuszkiewicz E."/>
            <person name="Gottschalk G."/>
            <person name="Carniel E."/>
            <person name="Hacker J."/>
        </authorList>
    </citation>
    <scope>NUCLEOTIDE SEQUENCE [LARGE SCALE GENOMIC DNA]</scope>
    <source>
        <strain>536 / UPEC</strain>
    </source>
</reference>
<reference key="2">
    <citation type="journal article" date="2010" name="Nature">
        <title>A widespread family of polymorphic contact-dependent toxin delivery systems in bacteria.</title>
        <authorList>
            <person name="Aoki S.K."/>
            <person name="Diner E.J."/>
            <person name="de Roodenbeke C.T."/>
            <person name="Burgess B.R."/>
            <person name="Poole S.J."/>
            <person name="Braaten B.A."/>
            <person name="Jones A.M."/>
            <person name="Webb J.S."/>
            <person name="Hayes C.S."/>
            <person name="Cotter P.A."/>
            <person name="Low D.A."/>
        </authorList>
    </citation>
    <scope>FUNCTION</scope>
    <scope>STRAIN SPECIFICITY</scope>
    <scope>INTERACTION WITH CDII</scope>
    <scope>SUBUNIT</scope>
    <scope>DOMAIN</scope>
    <source>
        <strain>536 / UPEC</strain>
    </source>
</reference>
<reference key="3">
    <citation type="journal article" date="2012" name="Genes Dev.">
        <title>Identification of a target cell permissive factor required for contact-dependent growth inhibition (CDI).</title>
        <authorList>
            <person name="Diner E.J."/>
            <person name="Beck C.M."/>
            <person name="Webb J.S."/>
            <person name="Low D.A."/>
            <person name="Hayes C.S."/>
        </authorList>
    </citation>
    <scope>FUNCTION</scope>
    <scope>INTERACTION WITH CYSK</scope>
    <scope>SUBUNIT</scope>
    <scope>MUTAGENESIS OF HIS-3193; 3239-GLY--ILE-3242 AND ILE-3242</scope>
    <source>
        <strain>536 / UPEC</strain>
    </source>
</reference>
<reference key="4">
    <citation type="journal article" date="2013" name="PLoS ONE">
        <title>Delivery of CdiA nuclease toxins into target cells during contact-dependent growth inhibition.</title>
        <authorList>
            <person name="Webb J.S."/>
            <person name="Nikolakakis K.C."/>
            <person name="Willett J.L."/>
            <person name="Aoki S.K."/>
            <person name="Hayes C.S."/>
            <person name="Low D.A."/>
        </authorList>
    </citation>
    <scope>FUNCTION</scope>
    <scope>SUBCELLULAR LOCATION</scope>
    <scope>PARTIAL DEPENDENCE ON BAMA</scope>
    <source>
        <strain>536 / UPEC</strain>
    </source>
</reference>
<reference key="5">
    <citation type="journal article" date="2014" name="Mol. Microbiol.">
        <title>The F pilus mediates a novel pathway of CDI toxin import.</title>
        <authorList>
            <person name="Beck C.M."/>
            <person name="Diner E.J."/>
            <person name="Kim J.J."/>
            <person name="Low D.A."/>
            <person name="Hayes C.S."/>
        </authorList>
    </citation>
    <scope>FUNCTION</scope>
    <scope>SUBCELLULAR LOCATION</scope>
    <scope>DOMAIN</scope>
    <scope>MUTAGENESIS OF 3016-VAL--SER-3022; 3028-CYS--CYS-3034 AND HIS-3193</scope>
    <source>
        <strain>536 / UPEC</strain>
    </source>
</reference>
<reference key="6">
    <citation type="journal article" date="2014" name="Mol. Microbiol.">
        <title>The proton-motive force is required for translocation of CDI toxins across the inner membrane of target bacteria.</title>
        <authorList>
            <person name="Ruhe Z.C."/>
            <person name="Nguyen J.Y."/>
            <person name="Beck C.M."/>
            <person name="Low D.A."/>
            <person name="Hayes C.S."/>
        </authorList>
    </citation>
    <scope>FUNCTION AS A TRNA NUCLEASE</scope>
    <scope>REQUIRES PMF FOR TRANSLOCATION</scope>
    <scope>SUBCELLULAR LOCATION</scope>
    <source>
        <strain>536 / UPEC</strain>
    </source>
</reference>
<reference key="7">
    <citation type="journal article" date="2015" name="Proc. Natl. Acad. Sci. U.S.A.">
        <title>Contact-dependent growth inhibition toxins exploit multiple independent cell-entry pathways.</title>
        <authorList>
            <person name="Willett J.L."/>
            <person name="Gucinski G.C."/>
            <person name="Fatherree J.P."/>
            <person name="Low D.A."/>
            <person name="Hayes C.S."/>
        </authorList>
    </citation>
    <scope>FUNCTION</scope>
    <scope>RECEPTOR FOR ENTRY INTO TARGET CELL CYTOPLASM</scope>
    <scope>DOMAIN</scope>
    <source>
        <strain>536 / UPEC</strain>
    </source>
</reference>
<reference key="8">
    <citation type="journal article" date="2016" name="PLoS Pathog.">
        <title>CdiA effectors from uropathogenic Escherichia coli use heterotrimeric osmoporins as receptors to recognize target bacteria.</title>
        <authorList>
            <person name="Beck C.M."/>
            <person name="Willett J.L."/>
            <person name="Cunningham D.A."/>
            <person name="Kim J.J."/>
            <person name="Low D.A."/>
            <person name="Hayes C.S."/>
        </authorList>
    </citation>
    <scope>IDENTIFICATION OF HETEROTRIMERIC OMPC-OMPF RECEPTOR</scope>
    <source>
        <strain>536 / UPEC</strain>
    </source>
</reference>
<reference key="9">
    <citation type="journal article" date="2017" name="MBio">
        <title>CdiA effectors use modular receptor-binding domains to recognize target bacteria.</title>
        <authorList>
            <person name="Ruhe Z.C."/>
            <person name="Nguyen J.Y."/>
            <person name="Xiong J."/>
            <person name="Koskiniemi S."/>
            <person name="Beck C.M."/>
            <person name="Perkins B.R."/>
            <person name="Low D.A."/>
            <person name="Hayes C.S."/>
        </authorList>
    </citation>
    <scope>DOMAIN</scope>
    <source>
        <strain>536 / UPEC</strain>
    </source>
</reference>
<reference evidence="20 21" key="10">
    <citation type="journal article" date="2016" name="Proc. Natl. Acad. Sci. U.S.A.">
        <title>Unraveling the essential role of CysK in CDI toxin activation.</title>
        <authorList>
            <person name="Johnson P.M."/>
            <person name="Beck C.M."/>
            <person name="Morse R.P."/>
            <person name="Garza-Sanchez F."/>
            <person name="Low D.A."/>
            <person name="Hayes C.S."/>
            <person name="Goulding C.W."/>
        </authorList>
    </citation>
    <scope>X-RAY CRYSTALLOGRAPHY (2.70 ANGSTROMS) OF 3016-3242 IN COMPLEX WITH CYSK AND WITH CDII AND CYSK</scope>
    <scope>POSSIBLE ACTIVE SITE</scope>
    <scope>COFACTOR</scope>
    <scope>SUBUNIT</scope>
    <scope>MUTAGENESIS OF ASN-3164; LYS-3167; ASP-3170; TRP-3191; HIS-3193; GLU-3196; THR-3200 AND ARG-3202</scope>
</reference>
<keyword id="KW-0002">3D-structure</keyword>
<keyword id="KW-0175">Coiled coil</keyword>
<keyword id="KW-0255">Endonuclease</keyword>
<keyword id="KW-0378">Hydrolase</keyword>
<keyword id="KW-0472">Membrane</keyword>
<keyword id="KW-0540">Nuclease</keyword>
<keyword id="KW-0694">RNA-binding</keyword>
<keyword id="KW-0964">Secreted</keyword>
<keyword id="KW-0732">Signal</keyword>
<keyword id="KW-1266">Target cell cytoplasm</keyword>
<keyword id="KW-1052">Target cell membrane</keyword>
<keyword id="KW-1053">Target membrane</keyword>
<keyword id="KW-0800">Toxin</keyword>
<keyword id="KW-0820">tRNA-binding</keyword>
<keyword id="KW-0843">Virulence</keyword>
<evidence type="ECO:0000250" key="1">
    <source>
        <dbReference type="UniProtKB" id="A0A1S4NYE3"/>
    </source>
</evidence>
<evidence type="ECO:0000255" key="2"/>
<evidence type="ECO:0000256" key="3">
    <source>
        <dbReference type="SAM" id="MobiDB-lite"/>
    </source>
</evidence>
<evidence type="ECO:0000269" key="4">
    <source>
    </source>
</evidence>
<evidence type="ECO:0000269" key="5">
    <source>
    </source>
</evidence>
<evidence type="ECO:0000269" key="6">
    <source>
    </source>
</evidence>
<evidence type="ECO:0000269" key="7">
    <source>
    </source>
</evidence>
<evidence type="ECO:0000269" key="8">
    <source>
    </source>
</evidence>
<evidence type="ECO:0000269" key="9">
    <source>
    </source>
</evidence>
<evidence type="ECO:0000269" key="10">
    <source>
    </source>
</evidence>
<evidence type="ECO:0000269" key="11">
    <source>
    </source>
</evidence>
<evidence type="ECO:0000269" key="12">
    <source>
    </source>
</evidence>
<evidence type="ECO:0000303" key="13">
    <source>
    </source>
</evidence>
<evidence type="ECO:0000303" key="14">
    <source>
    </source>
</evidence>
<evidence type="ECO:0000305" key="15"/>
<evidence type="ECO:0000305" key="16">
    <source>
    </source>
</evidence>
<evidence type="ECO:0000305" key="17">
    <source>
    </source>
</evidence>
<evidence type="ECO:0000305" key="18">
    <source>
    </source>
</evidence>
<evidence type="ECO:0000305" key="19">
    <source>
    </source>
</evidence>
<evidence type="ECO:0007744" key="20">
    <source>
        <dbReference type="PDB" id="5J43"/>
    </source>
</evidence>
<evidence type="ECO:0007744" key="21">
    <source>
        <dbReference type="PDB" id="5J5V"/>
    </source>
</evidence>
<evidence type="ECO:0007829" key="22">
    <source>
        <dbReference type="PDB" id="5J43"/>
    </source>
</evidence>
<evidence type="ECO:0007829" key="23">
    <source>
        <dbReference type="PDB" id="5J5V"/>
    </source>
</evidence>
<sequence length="3242" mass="330728">MHQPPVRFTYRLLSYLISTIIAGQPLLPAVGAVITPQNGAGMDKAANGVPVVNIATPNGAGISHNRFTDYNVGKEGLILNNATGKLNPTQLGGLIQNNPNLKAGGEAKGIINEVTGGNRSLLQGYTEVAGKAANVMVANPYGITCDGCGFINTPHATLTTGRPVMNADGSLQALEVTEGSITINGAGLDGTRSDAVSIIARATEVNAALHAKDLTVTAGANRITADGRVSALKGEGDVPKVAVDTGALGGMYARRIHLTSTESGVGVNLGNLYARDGDIILSSAGKLVLKNSLAGGNTTVTGTDVSLSGDNKAGGNLSVTGTTGLTLNQPRLVTDKNLVLSSSGQIVQNGGELTAGQNAMLSAQHLNQTSGTVNAAENVTLTTTNDTTLKGRSIAGKTLTVSSGSLNNGGTLVAGRDATVKTGTFSNTGTVQGNGLKVTATDLTSTGSIKSGSTLDISARNATLSGDAGAKDSARVTVSGTLENRGRLVSDDVLTLSATQINNSGTLSGAKELVASADTLTTTEKSVTNSDGNLMLDSASSTLAGETSAGGTVSVKGNSLKTTTTAQTQGNSVSVDVQNAQLDGTQAARDILTLNASEKLTHSGKSSAPSLSLSAPELTSSGVLVGSALNTQSQTLTNSGLLQGEASLTVNTQRLDNQQNGTLYSAADLTLDIPDIRNSGLITGDNGLMLNAVSLSNPGKIIADTLSVRATTLDGDGLLQGAGALALAGDTLSQGSHGRWLTADDLSLRGKTLNTAGTTQGQNITVQADRWANSGSVLATGNLTASATGQLTSTGDIMSQGDTTLKAATTDNRGSLLSAGTLSLDGNSLDNSGTVQGDHVTIRQNSVTNSGTLTGIAALTLAARMVSPQPALMNNGGSLLTSGDLTITAGSLVNSGAIQAADSLTARLTGELVSTAGSKVTSNGEMALSALNLSNSGQWIAKNLTLKANSLTSAGDITGVDTLTLTVNQTLNNQANGKLLSAGVLTLKADSVTNDGQLQGNATTITAGQLTNGGHLQGETLTLAASGGVNNRFGGVLMSRNALNVSTATLSNQGTIQGGGGVSLNVTDRLQNDSKILSGSNLTLTAQVLANTGSGLVQAATLLLDVVNTVNGGRVLATGSADVKGTTLNNTGTLQGADLLVNYHTFSNSGTLLGTSGLGVKGSSLLQHGTGRLYSAGNLLLDAQDFSGQGQVVATGDVTLKLIAALTNHGTLAAGKTLSVTSQNAITNGGVMQGDAMVLGAGEAFTNNGMLTAGKGNSVFSAQRLFLNAPGSLQAGGDVSLNSRSDITISGFTGTAGSLTMNVAGTLLNSALIYAGNNLKLFTDRLHNQHGDILAGNSLWVQKDASGGANTEIINTSGNIETHQGDIVVRTGHLLNQREGFSATTTTRTNPSSIQGMGNALVDIPLSLLPDGSYGYFTREVENQHGTPCNGHGACNITMDTLYYYAPFADSATQRFLSSQNITTVTGADNPAGRIASGRNLSAEAERLENRASFILANGDIALSGRELSNQSWQTGTENEYLVYRYDPKTFYGSYATGSLDKLPLLSPEFENNTIRFSLDGREKDYTPGKTYYSVIQAGGDVKTRFTSSINNGTTTAHAGSVSPVVSAPVLNTLSQQTGGDSLTQTALQQYEPVVVGSPQWHDELAGALKNIAGGSPLTGQTGISDDWPLPSGNNGYLVPSTDPDSPYLITVNPKLDGLGQVDSHLFAGLYELLGAKPGQAPRETAPSYTDEKQFLGSSYFLDRLGLKPEKDYRFLGDAVFDTRYVSNAVLSRTGSRYLNGLGSDTEQMRYLMDNAARQQKGLGLEFGVALTAEQIAQLDGSILWWESATINGQTVMVPKLYLSPEDITLHNGSVISGNNVQLAGGNITNSGSSINAQNGLSLDSTGYIDNLNAGLISAGGSLDLSAIGDISNISSVISGKTVQLESVSGNISNITRRQQWNAGSDSRYGGVHLSGTDTGPVATIKGTDSLSLDAGKNIDITGATVSSGGTLGMSAGNDINIAANLISGSKSQSGFWHTDDNSASSTTSQGSSISAGGNLAMAAGHNLDVTASSVSAGHSALLSAGNDLSLNAVRESKNSRNGRSESHESHAAVSTVTAGDNLLLVAGRDVASQAAGVAAENNVVIRGGRDVNLVAESAGAGDSYTSKKKKEINETVRQQGTEIASGGDTTVNAGRDITAVASSVTATGNISVNAGRDVALTTATESDYHYLETKKKSGGFLSKKTTHTISEDSASREAGSLLSGNRVTVNAGDNLTVEGSDVVADQDVSLAAGNHVDVLAATSTDTSWRFKETKKSGLMGTGGIGFTIGSSKTTHDRREAGTTQSQSASTIGSTAGNVSITAGKQAHISGSDVIANRDISITGDSVVVDPGHDRRTVDEKFEQKKSGLTVALSGTVGSAINNAVTSAQETKESSDSRLKALQATKTALSGVQAGQAATMASATGDPNATGVSLSLTTQKSKSQQHSESDTVSGSTLNAGNNLSVVATGKNRGDNRGDIVIAGSQLKVGGNTSLDAANDILLSGAANTQKTTGRNSSSGGGVGVSIGAGGNGAGISVFAGVNAAKGSEKGNGTEWTETTTDSGKTVTINSGRDTVLNGAQVNGNRIIADVGHDLLISSQQDTSKYDSKQTSVAAGGSFTFGSMTGSGYIAASRDKMKSRFDSVAEQTGMFAGDGGFDITVGRHTQLDGAVIASTATPDKNHLDTGTLGFSDLHNEADYKVSHSGISLSGGGSFGDKFQGNMPGGMISAGGHSGHAEGTTQAAVAEGTITIRDRDNQKQNLANLSRDPAHTNDSISPIFDKEKEQRRLQTVGLISDIGSQVADIARTQGELNALKAAQDKYGPVPADATEEQRQAYLAKLRDTPEYKKEQEKYGTGSDMQRGIQAATAALQGLVGGNMAGALAGASAPELANIIGHHAGIDDNTAAKAIAHAILGGVTAALQGNSAAAGAIGAGTGEVIASAIAKSLYPGVDPSKLTEDQKQTVSTLATLSAGMAGGIASGDVAGAAAGAGAGKNVVENNALSLVARGCAVAAPCRTKVAEQLLEIGAKAGMAGLAGAAVKDMADRMTSDELEHLITLQMMGNDEITTKYLSSLHDKYGSGAASNPNIGKDLTDAEKVELGGSGSGTGTPPPSENDPKQQNEKTVDKLNQKQESAIKKIDNTIKNALKDHDIIGTLKDMDGKPVPKENGGYWDHMQEMQNTLRGLRNHADTLKNVNNPEAQAAYGRATDAINKIESALKGYGI</sequence>
<protein>
    <recommendedName>
        <fullName evidence="15">tRNA nuclease CdiA</fullName>
        <shortName>tRNase CdiA</shortName>
        <ecNumber>3.1.-.-</ecNumber>
    </recommendedName>
    <alternativeName>
        <fullName evidence="14">Anticodon nuclease CdiA</fullName>
    </alternativeName>
    <alternativeName>
        <fullName>CdiA-EC536</fullName>
    </alternativeName>
    <alternativeName>
        <fullName>Toxin CdiA</fullName>
    </alternativeName>
</protein>
<gene>
    <name evidence="13" type="primary">cdiA</name>
    <name type="ordered locus">ECP_4580</name>
</gene>
<name>CDIA_ECOL5</name>
<accession>Q0T963</accession>
<proteinExistence type="evidence at protein level"/>
<comment type="function">
    <text evidence="4 5 6 7 8 9 10 11">Toxic component of a toxin-immunity protein module, which functions as a cellular contact-dependent growth inhibition (CDI) system. CDI modules allow bacteria to communicate with and inhibit the growth of closely related neighboring bacteria in a contact-dependent fashion (target cell counts decrease 100- to 1000-fold). CdiA toxicity is neutralized by its cognate immunity protein CdiI, but not by CdiI from other bacteria (PubMed:23469034, PubMed:24889811). Uses heterotrimeric OmpC and OmpF as target cell outer membrane receptors; receptor function depends on polymorphisms in extracellular loops L4 and L5 of OmpC; interacts with itself and closely related bacteria but also with OmpC from E.cloacae ATCC 13047. Its ability to preferentially bind to 'self' receptors suggests it may also play a role in self-recognition and kin selection (PubMed:27723824). A bamA mutation that decreases its expression about 5-fold is partially resistant to this strain of CdiA, probably due to decreased outer membrane receptor protein assembly (PubMed:23469034). Isolated CdiA-CT is imported in an F-pilus-mediated fashion; CdiA-CT inhibits F-mediated conjugation, probably via its N-terminus (residues 3016-3097), although it is not clear if this is physiologically significant (PubMed:24889811). Gains access to the cytoplasm of target cells by using integral inner membrane protein FtsH (PubMed:26305955). The C-terminal domain (CT) cleaves within tRNA anticodon loops (PubMed:22333533, PubMed:24889811); this activity is inhibited by cognate CdiI (PubMed:21085179, PubMed:22333533, PubMed:24889811). tRNase activity of CdiA-CT is stimulated by CysK, although the extreme C-terminus (residues 3098-3242) has tRNase activity in the absence of CysK. In vivo CDI toxicity requires CysK (PubMed:22333533, PubMed:24889811). CysK stabilizes CdiA-CT, allowing it to bind tRNA substrate; neither CdiA-CT nor CysK bind tRNA alone in vitro (PubMed:27531961). Purified CdiA-CT (residues 3016-3242) inhibits E.coli cell growth when added to cultures alone or in complex with cognate CdiI, growth is inhibited when cognate CdiI is present within the cell but not when a CdiA-CT/CdiI complex is added extracellularly, suggesting CdiA-CT alone but not the CdiA-CT/CdiI complex is imported into the target cell (PubMed:24889811).</text>
</comment>
<comment type="function">
    <text evidence="17">The CdiA protein is thought to be exported from the cell through the central lumen of CdiB, the other half of its two-partner system (TPS). The TPS domain probably remains associated with CdiB while the FHA-1 domain forms an extended filament with the receptor-binding domain (RBD) at its extremity; in the secretion arrested state the C-terminus of the RBD and YP domains form a hairpin-like structure as the FHA-2, PT and CT domains are periplasmic. The YP domain is probably responsible for this arrest at the point where it re-enters the host cell periplasm. Upon binding to a target cell outer membrane receptor (heterotrimeric OmpC-OmpF for this CDI) a signal is transmitted to activate secretion. The filament elongates slightly, the rest of CdiA is secreted and the FHA-2 domain becomes stably associated with the target cell's outer membrane where it facilitates entry of the toxic CT domain into the target cell periplasm. From there the toxic CT domain is cleaved and gains access to the target cell cytoplasm via an inner membrane protein (FtsH for this CDI).</text>
</comment>
<comment type="cofactor">
    <cofactor evidence="10">
        <name>a divalent metal cation</name>
        <dbReference type="ChEBI" id="CHEBI:60240"/>
    </cofactor>
    <text evidence="10">Mg(2+) and Ca(2+) support tRNase activity in vitro.</text>
</comment>
<comment type="subunit">
    <text evidence="4 5 10">The C-terminal (CT) domain interacts with cognate CdiI but not non-cognate CdiI from D.dadantii strain 3937 (PubMed:21085179). CdiA-CT also interacts with CysK; this is blocked upon preincubation with O-acetyl-L-serine. CysK forms a complex with CdiA-CT/CdiI (PubMed:22333533). One CdiA toxin subunit binds to each subunit of the CysK homodimer, and one CdiI immunity protein binds to each toxin subunit; the immune complex is thus a dimer of trimers. The 4 C-terminal residues of CdiA fit into the active site of CysK (PubMed:27531961).</text>
</comment>
<comment type="subcellular location">
    <subcellularLocation>
        <location evidence="6">Secreted</location>
    </subcellularLocation>
    <subcellularLocation>
        <location evidence="6">Target cell membrane</location>
    </subcellularLocation>
    <subcellularLocation>
        <location evidence="6 7 8">Target cell</location>
        <location evidence="6 7 8">Target cell cytoplasm</location>
    </subcellularLocation>
    <text evidence="6 8 15">Secreted to the cell surface by CdiB, its two partner secretion pathway (TPS) partner (Probable). Expressed on the cell surface of both the encoding cell, and in mixing experiments on the target cell surface, in a proteinase K-sensitive manner. Both the N- and C-termini can be detected on target cells, whereas only the CT domain is detected in the target cell cytoplasm (PubMed:23469034). Toxin translocation into the target cell depends on the proton motive force of the target cell, but not on tolA or tonB (PubMed:25174572).</text>
</comment>
<comment type="domain">
    <text evidence="4 7 9 12">The CDI activity resides in the approximately 230 residue C-terminal (CT) domain; exchanging the CT domain and cdiI gene between different strains confers resistance within cognate but not non-cognate systems (i.e. CdiI-536 / UPEC neutralizes CdiA-CT from strain 536 / UPEC but not CdiA-CT from E.coli strain EC93, Y.pestis strain CO92 or D.dadantii 3937) (PubMed:21085179). The 82 N-terminal residues (toxin import domain, residues 3016-3097) are sufficient to translocate the tRNA nuclease domain of colicin E5 into E.coli cells, probably via binding to the F pilus (PubMed:24889811). Exchanging the outer membrane receptor-binding domains between proteins exchanges the receptors recognized by CdiA. Residues 1669-2310 contribute to toxin delivery also (PubMed:28351921). The inner membrane translocation domain (IMTD) targets the toxin to a specific target cell inner membrane protein (FtsH in this case), which delivers the toxin to the target cell cytoplasm. Exchanging this IMTD between CdiA proteins alters the inner membrane protein delivery system but not the CdiI immunity protein, strongly suggesting CdiI recognizes only the toxic domain (PubMed:26305955).</text>
</comment>
<comment type="similarity">
    <text evidence="15">In the N-terminal section; belongs to the CdiA toxin family.</text>
</comment>
<organism>
    <name type="scientific">Escherichia coli O6:K15:H31 (strain 536 / UPEC)</name>
    <dbReference type="NCBI Taxonomy" id="362663"/>
    <lineage>
        <taxon>Bacteria</taxon>
        <taxon>Pseudomonadati</taxon>
        <taxon>Pseudomonadota</taxon>
        <taxon>Gammaproteobacteria</taxon>
        <taxon>Enterobacterales</taxon>
        <taxon>Enterobacteriaceae</taxon>
        <taxon>Escherichia</taxon>
    </lineage>
</organism>